<proteinExistence type="inferred from homology"/>
<organism>
    <name type="scientific">Psychrobacter cryohalolentis (strain ATCC BAA-1226 / DSM 17306 / VKM B-2378 / K5)</name>
    <dbReference type="NCBI Taxonomy" id="335284"/>
    <lineage>
        <taxon>Bacteria</taxon>
        <taxon>Pseudomonadati</taxon>
        <taxon>Pseudomonadota</taxon>
        <taxon>Gammaproteobacteria</taxon>
        <taxon>Moraxellales</taxon>
        <taxon>Moraxellaceae</taxon>
        <taxon>Psychrobacter</taxon>
    </lineage>
</organism>
<feature type="chain" id="PRO_0000241822" description="UPF0178 protein Pcryo_0301">
    <location>
        <begin position="1"/>
        <end position="149"/>
    </location>
</feature>
<comment type="similarity">
    <text evidence="1">Belongs to the UPF0178 family.</text>
</comment>
<gene>
    <name type="ordered locus">Pcryo_0301</name>
</gene>
<protein>
    <recommendedName>
        <fullName evidence="1">UPF0178 protein Pcryo_0301</fullName>
    </recommendedName>
</protein>
<name>Y301_PSYCK</name>
<reference key="1">
    <citation type="submission" date="2006-03" db="EMBL/GenBank/DDBJ databases">
        <title>Complete sequence of chromosome of Psychrobacter cryohalolentis K5.</title>
        <authorList>
            <consortium name="US DOE Joint Genome Institute"/>
            <person name="Copeland A."/>
            <person name="Lucas S."/>
            <person name="Lapidus A."/>
            <person name="Barry K."/>
            <person name="Detter J.C."/>
            <person name="Glavina T."/>
            <person name="Hammon N."/>
            <person name="Israni S."/>
            <person name="Dalin E."/>
            <person name="Tice H."/>
            <person name="Pitluck S."/>
            <person name="Brettin T."/>
            <person name="Bruce D."/>
            <person name="Han C."/>
            <person name="Tapia R."/>
            <person name="Sims D.R."/>
            <person name="Gilna P."/>
            <person name="Schmutz J."/>
            <person name="Larimer F."/>
            <person name="Land M."/>
            <person name="Hauser L."/>
            <person name="Kyrpides N."/>
            <person name="Kim E."/>
            <person name="Richardson P."/>
        </authorList>
    </citation>
    <scope>NUCLEOTIDE SEQUENCE [LARGE SCALE GENOMIC DNA]</scope>
    <source>
        <strain>ATCC BAA-1226 / DSM 17306 / VKM B-2378 / K5</strain>
    </source>
</reference>
<sequence>MQIWVDADSVPLIAKDLIIKTAERTQTMAIFVANQPIKLRKSPLLVMTVVPSGFDKADDYIVEQIQPGDLAITSDIPLANDILDKGGMVLTTRGVVYDKNNIKQKLNMRDFMDTMRGTGVLELQEMSGQKPYGDRDKKAFADGLNKLVR</sequence>
<accession>Q1QE18</accession>
<dbReference type="EMBL" id="CP000323">
    <property type="protein sequence ID" value="ABE74085.1"/>
    <property type="molecule type" value="Genomic_DNA"/>
</dbReference>
<dbReference type="RefSeq" id="WP_011279582.1">
    <property type="nucleotide sequence ID" value="NC_007969.1"/>
</dbReference>
<dbReference type="STRING" id="335284.Pcryo_0301"/>
<dbReference type="KEGG" id="pcr:Pcryo_0301"/>
<dbReference type="eggNOG" id="COG1671">
    <property type="taxonomic scope" value="Bacteria"/>
</dbReference>
<dbReference type="HOGENOM" id="CLU_106619_2_1_6"/>
<dbReference type="Proteomes" id="UP000002425">
    <property type="component" value="Chromosome"/>
</dbReference>
<dbReference type="CDD" id="cd18720">
    <property type="entry name" value="PIN_YqxD-like"/>
    <property type="match status" value="1"/>
</dbReference>
<dbReference type="HAMAP" id="MF_00489">
    <property type="entry name" value="UPF0178"/>
    <property type="match status" value="1"/>
</dbReference>
<dbReference type="InterPro" id="IPR003791">
    <property type="entry name" value="UPF0178"/>
</dbReference>
<dbReference type="NCBIfam" id="NF001095">
    <property type="entry name" value="PRK00124.1"/>
    <property type="match status" value="1"/>
</dbReference>
<dbReference type="PANTHER" id="PTHR35146">
    <property type="entry name" value="UPF0178 PROTEIN YAII"/>
    <property type="match status" value="1"/>
</dbReference>
<dbReference type="PANTHER" id="PTHR35146:SF1">
    <property type="entry name" value="UPF0178 PROTEIN YAII"/>
    <property type="match status" value="1"/>
</dbReference>
<dbReference type="Pfam" id="PF02639">
    <property type="entry name" value="DUF188"/>
    <property type="match status" value="1"/>
</dbReference>
<evidence type="ECO:0000255" key="1">
    <source>
        <dbReference type="HAMAP-Rule" id="MF_00489"/>
    </source>
</evidence>